<sequence>MTKHYLNSKYQSEQRSSAMKKITMGTASIILGSLVYIGADSQQVNAATEATNATNNQSTQVSQATSQPINFQVQKDGSSEKSHMDDYMQHPGKVIKQNNKYYFQAVLNNASFWKEYKFYNANNQELATTVVNDDKKADTRTINVAVEPGYKSLTTKVHIVVPQINYNHRYTTHLEFEKAIPTLADAAKPNNVKPVQPKPAQPKTPTEQTKPVQPKVEKVKPAVTAPSKNENRQTTKVVSSEATKDQSQTQSARTVKTTQTAQDQNKVQTPVKDVATAKSESNNQAVSDNKSQQTNKVTKQNEVHKQGPSKDSKAKELPKTGLTSVDNFISTVAFATLALLGSLSLLLFKRKESK</sequence>
<organism>
    <name type="scientific">Staphylococcus aureus (strain MRSA252)</name>
    <dbReference type="NCBI Taxonomy" id="282458"/>
    <lineage>
        <taxon>Bacteria</taxon>
        <taxon>Bacillati</taxon>
        <taxon>Bacillota</taxon>
        <taxon>Bacilli</taxon>
        <taxon>Bacillales</taxon>
        <taxon>Staphylococcaceae</taxon>
        <taxon>Staphylococcus</taxon>
    </lineage>
</organism>
<proteinExistence type="inferred from homology"/>
<comment type="function">
    <text evidence="2 3">Cell wall-anchored surface receptor that participates in the extraction of heme from oxidized methemoglobin/metHb to enable growth on hemoglobin as a sole iron source (By similarity). Receives heme from IsdB and transfers it to IsdC (By similarity). Also plays a role in the inhibition of host immune response. Protects S.aureus against the bactericidal protease activity of apolactoferrin. Decreases bacterial cellular hydrophobicity, which renders S.aureus resistant to bactericidal human skin fatty acids as well as to beta-defensins and cathelicidin. Also binds fibronectin and chains B-beta and gamma of fibrinogen, promoting clumping of S.aureus with fibrinogen. Involved in adherence of S.aureus to human desquamated nasal epithelial cells and is required for nasal colonization (By similarity).</text>
</comment>
<comment type="subunit">
    <text evidence="2 3">Monomer. Interacts with IsdC (By similarity). Interacts with IsdB (By similarity).</text>
</comment>
<comment type="subcellular location">
    <subcellularLocation>
        <location evidence="2">Secreted</location>
        <location evidence="2">Cell wall</location>
        <topology evidence="2">Peptidoglycan-anchor</topology>
    </subcellularLocation>
    <text evidence="2">Encodes an LPXTG motif-containing sorting signal that targets to the cell wall, which is catalyzed by sortase A.</text>
</comment>
<comment type="induction">
    <text evidence="1">Repressed by fur in the presence of iron.</text>
</comment>
<comment type="domain">
    <text evidence="1">The NEAT domain is responsible for binding Fe(3+) and Fe(2+) heme and fibrinogen. The NEAT domain is an inhibitor of apolactoferrin activity, while the C-domain confers resistance to bovine lactoferricin (By similarity).</text>
</comment>
<comment type="similarity">
    <text evidence="8">Belongs to the IsdA family.</text>
</comment>
<name>ISDA_STAAR</name>
<feature type="signal peptide" evidence="1">
    <location>
        <begin position="1"/>
        <end position="46"/>
    </location>
</feature>
<feature type="chain" id="PRO_0000046090" description="Iron-regulated surface determinant protein A">
    <location>
        <begin position="47"/>
        <end position="320"/>
    </location>
</feature>
<feature type="propeptide" id="PRO_0000046091" description="Removed by sortase A" evidence="6">
    <location>
        <begin position="321"/>
        <end position="354"/>
    </location>
</feature>
<feature type="domain" description="NEAT" evidence="5">
    <location>
        <begin position="62"/>
        <end position="184"/>
    </location>
</feature>
<feature type="region of interest" description="Disordered" evidence="7">
    <location>
        <begin position="188"/>
        <end position="318"/>
    </location>
</feature>
<feature type="short sequence motif" description="LPXTG sorting signal" evidence="6">
    <location>
        <begin position="317"/>
        <end position="321"/>
    </location>
</feature>
<feature type="compositionally biased region" description="Low complexity" evidence="7">
    <location>
        <begin position="203"/>
        <end position="214"/>
    </location>
</feature>
<feature type="compositionally biased region" description="Polar residues" evidence="7">
    <location>
        <begin position="226"/>
        <end position="268"/>
    </location>
</feature>
<feature type="compositionally biased region" description="Polar residues" evidence="7">
    <location>
        <begin position="278"/>
        <end position="298"/>
    </location>
</feature>
<feature type="compositionally biased region" description="Basic and acidic residues" evidence="7">
    <location>
        <begin position="299"/>
        <end position="318"/>
    </location>
</feature>
<feature type="binding site" evidence="1">
    <location>
        <position position="75"/>
    </location>
    <ligand>
        <name>heme</name>
        <dbReference type="ChEBI" id="CHEBI:30413"/>
    </ligand>
</feature>
<feature type="binding site" evidence="1">
    <location>
        <position position="82"/>
    </location>
    <ligand>
        <name>heme</name>
        <dbReference type="ChEBI" id="CHEBI:30413"/>
    </ligand>
</feature>
<feature type="binding site" description="axial binding residue" evidence="4">
    <location>
        <position position="166"/>
    </location>
    <ligand>
        <name>heme</name>
        <dbReference type="ChEBI" id="CHEBI:30413"/>
    </ligand>
    <ligandPart>
        <name>Fe</name>
        <dbReference type="ChEBI" id="CHEBI:18248"/>
    </ligandPart>
</feature>
<feature type="modified residue" description="Pentaglycyl murein peptidoglycan amidated threonine" evidence="6">
    <location>
        <position position="320"/>
    </location>
</feature>
<evidence type="ECO:0000250" key="1"/>
<evidence type="ECO:0000250" key="2">
    <source>
        <dbReference type="UniProtKB" id="A6QG31"/>
    </source>
</evidence>
<evidence type="ECO:0000250" key="3">
    <source>
        <dbReference type="UniProtKB" id="Q7A152"/>
    </source>
</evidence>
<evidence type="ECO:0000250" key="4">
    <source>
        <dbReference type="UniProtKB" id="Q7A655"/>
    </source>
</evidence>
<evidence type="ECO:0000255" key="5">
    <source>
        <dbReference type="PROSITE-ProRule" id="PRU00337"/>
    </source>
</evidence>
<evidence type="ECO:0000255" key="6">
    <source>
        <dbReference type="PROSITE-ProRule" id="PRU00477"/>
    </source>
</evidence>
<evidence type="ECO:0000256" key="7">
    <source>
        <dbReference type="SAM" id="MobiDB-lite"/>
    </source>
</evidence>
<evidence type="ECO:0000305" key="8"/>
<reference key="1">
    <citation type="journal article" date="2004" name="Proc. Natl. Acad. Sci. U.S.A.">
        <title>Complete genomes of two clinical Staphylococcus aureus strains: evidence for the rapid evolution of virulence and drug resistance.</title>
        <authorList>
            <person name="Holden M.T.G."/>
            <person name="Feil E.J."/>
            <person name="Lindsay J.A."/>
            <person name="Peacock S.J."/>
            <person name="Day N.P.J."/>
            <person name="Enright M.C."/>
            <person name="Foster T.J."/>
            <person name="Moore C.E."/>
            <person name="Hurst L."/>
            <person name="Atkin R."/>
            <person name="Barron A."/>
            <person name="Bason N."/>
            <person name="Bentley S.D."/>
            <person name="Chillingworth C."/>
            <person name="Chillingworth T."/>
            <person name="Churcher C."/>
            <person name="Clark L."/>
            <person name="Corton C."/>
            <person name="Cronin A."/>
            <person name="Doggett J."/>
            <person name="Dowd L."/>
            <person name="Feltwell T."/>
            <person name="Hance Z."/>
            <person name="Harris B."/>
            <person name="Hauser H."/>
            <person name="Holroyd S."/>
            <person name="Jagels K."/>
            <person name="James K.D."/>
            <person name="Lennard N."/>
            <person name="Line A."/>
            <person name="Mayes R."/>
            <person name="Moule S."/>
            <person name="Mungall K."/>
            <person name="Ormond D."/>
            <person name="Quail M.A."/>
            <person name="Rabbinowitsch E."/>
            <person name="Rutherford K.M."/>
            <person name="Sanders M."/>
            <person name="Sharp S."/>
            <person name="Simmonds M."/>
            <person name="Stevens K."/>
            <person name="Whitehead S."/>
            <person name="Barrell B.G."/>
            <person name="Spratt B.G."/>
            <person name="Parkhill J."/>
        </authorList>
    </citation>
    <scope>NUCLEOTIDE SEQUENCE [LARGE SCALE GENOMIC DNA]</scope>
    <source>
        <strain>MRSA252</strain>
    </source>
</reference>
<gene>
    <name type="primary">isdA</name>
    <name type="synonym">frpA</name>
    <name type="synonym">stbA</name>
    <name type="ordered locus">SAR1103</name>
</gene>
<protein>
    <recommendedName>
        <fullName>Iron-regulated surface determinant protein A</fullName>
    </recommendedName>
    <alternativeName>
        <fullName>Fur-regulated protein A</fullName>
    </alternativeName>
    <alternativeName>
        <fullName>Staphylococcal transferrin-binding protein A</fullName>
    </alternativeName>
</protein>
<dbReference type="EMBL" id="BX571856">
    <property type="protein sequence ID" value="CAG40105.1"/>
    <property type="molecule type" value="Genomic_DNA"/>
</dbReference>
<dbReference type="RefSeq" id="WP_000160848.1">
    <property type="nucleotide sequence ID" value="NC_002952.2"/>
</dbReference>
<dbReference type="SMR" id="Q6GHV6"/>
<dbReference type="KEGG" id="sar:SAR1103"/>
<dbReference type="HOGENOM" id="CLU_068057_0_0_9"/>
<dbReference type="PRO" id="PR:Q6GHV6"/>
<dbReference type="Proteomes" id="UP000000596">
    <property type="component" value="Chromosome"/>
</dbReference>
<dbReference type="GO" id="GO:0005576">
    <property type="term" value="C:extracellular region"/>
    <property type="evidence" value="ECO:0007669"/>
    <property type="project" value="UniProtKB-KW"/>
</dbReference>
<dbReference type="GO" id="GO:0046872">
    <property type="term" value="F:metal ion binding"/>
    <property type="evidence" value="ECO:0007669"/>
    <property type="project" value="UniProtKB-KW"/>
</dbReference>
<dbReference type="CDD" id="cd06920">
    <property type="entry name" value="NEAT"/>
    <property type="match status" value="1"/>
</dbReference>
<dbReference type="Gene3D" id="2.60.40.1850">
    <property type="match status" value="1"/>
</dbReference>
<dbReference type="InterPro" id="IPR050436">
    <property type="entry name" value="IsdA"/>
</dbReference>
<dbReference type="InterPro" id="IPR019931">
    <property type="entry name" value="LPXTG_anchor"/>
</dbReference>
<dbReference type="InterPro" id="IPR006635">
    <property type="entry name" value="NEAT_dom"/>
</dbReference>
<dbReference type="InterPro" id="IPR037250">
    <property type="entry name" value="NEAT_dom_sf"/>
</dbReference>
<dbReference type="NCBIfam" id="TIGR01167">
    <property type="entry name" value="LPXTG_anchor"/>
    <property type="match status" value="1"/>
</dbReference>
<dbReference type="PANTHER" id="PTHR37824">
    <property type="entry name" value="IRON-REGULATED SURFACE DETERMINANT PROTEIN C"/>
    <property type="match status" value="1"/>
</dbReference>
<dbReference type="PANTHER" id="PTHR37824:SF1">
    <property type="entry name" value="IRON-REGULATED SURFACE DETERMINANT PROTEIN C"/>
    <property type="match status" value="1"/>
</dbReference>
<dbReference type="Pfam" id="PF00746">
    <property type="entry name" value="Gram_pos_anchor"/>
    <property type="match status" value="1"/>
</dbReference>
<dbReference type="Pfam" id="PF05031">
    <property type="entry name" value="NEAT"/>
    <property type="match status" value="1"/>
</dbReference>
<dbReference type="SMART" id="SM00725">
    <property type="entry name" value="NEAT"/>
    <property type="match status" value="1"/>
</dbReference>
<dbReference type="SUPFAM" id="SSF158911">
    <property type="entry name" value="NEAT domain-like"/>
    <property type="match status" value="1"/>
</dbReference>
<dbReference type="PROSITE" id="PS50847">
    <property type="entry name" value="GRAM_POS_ANCHORING"/>
    <property type="match status" value="1"/>
</dbReference>
<dbReference type="PROSITE" id="PS50978">
    <property type="entry name" value="NEAT"/>
    <property type="match status" value="1"/>
</dbReference>
<keyword id="KW-0134">Cell wall</keyword>
<keyword id="KW-0349">Heme</keyword>
<keyword id="KW-0408">Iron</keyword>
<keyword id="KW-0479">Metal-binding</keyword>
<keyword id="KW-0572">Peptidoglycan-anchor</keyword>
<keyword id="KW-0964">Secreted</keyword>
<keyword id="KW-0732">Signal</keyword>
<accession>Q6GHV6</accession>